<organism>
    <name type="scientific">Shewanella baltica (strain OS195)</name>
    <dbReference type="NCBI Taxonomy" id="399599"/>
    <lineage>
        <taxon>Bacteria</taxon>
        <taxon>Pseudomonadati</taxon>
        <taxon>Pseudomonadota</taxon>
        <taxon>Gammaproteobacteria</taxon>
        <taxon>Alteromonadales</taxon>
        <taxon>Shewanellaceae</taxon>
        <taxon>Shewanella</taxon>
    </lineage>
</organism>
<dbReference type="EMBL" id="CP000891">
    <property type="protein sequence ID" value="ABX47185.1"/>
    <property type="molecule type" value="Genomic_DNA"/>
</dbReference>
<dbReference type="RefSeq" id="WP_011845334.1">
    <property type="nucleotide sequence ID" value="NC_009997.1"/>
</dbReference>
<dbReference type="SMR" id="A9KU74"/>
<dbReference type="GeneID" id="11774109"/>
<dbReference type="KEGG" id="sbn:Sbal195_0003"/>
<dbReference type="HOGENOM" id="CLU_040267_0_0_6"/>
<dbReference type="Proteomes" id="UP000000770">
    <property type="component" value="Chromosome"/>
</dbReference>
<dbReference type="GO" id="GO:0005737">
    <property type="term" value="C:cytoplasm"/>
    <property type="evidence" value="ECO:0007669"/>
    <property type="project" value="UniProtKB-SubCell"/>
</dbReference>
<dbReference type="GO" id="GO:0005524">
    <property type="term" value="F:ATP binding"/>
    <property type="evidence" value="ECO:0007669"/>
    <property type="project" value="UniProtKB-UniRule"/>
</dbReference>
<dbReference type="GO" id="GO:0003697">
    <property type="term" value="F:single-stranded DNA binding"/>
    <property type="evidence" value="ECO:0007669"/>
    <property type="project" value="UniProtKB-UniRule"/>
</dbReference>
<dbReference type="GO" id="GO:0006260">
    <property type="term" value="P:DNA replication"/>
    <property type="evidence" value="ECO:0007669"/>
    <property type="project" value="UniProtKB-UniRule"/>
</dbReference>
<dbReference type="GO" id="GO:0000731">
    <property type="term" value="P:DNA synthesis involved in DNA repair"/>
    <property type="evidence" value="ECO:0007669"/>
    <property type="project" value="TreeGrafter"/>
</dbReference>
<dbReference type="GO" id="GO:0006302">
    <property type="term" value="P:double-strand break repair"/>
    <property type="evidence" value="ECO:0007669"/>
    <property type="project" value="TreeGrafter"/>
</dbReference>
<dbReference type="GO" id="GO:0009432">
    <property type="term" value="P:SOS response"/>
    <property type="evidence" value="ECO:0007669"/>
    <property type="project" value="UniProtKB-UniRule"/>
</dbReference>
<dbReference type="Gene3D" id="3.40.50.300">
    <property type="entry name" value="P-loop containing nucleotide triphosphate hydrolases"/>
    <property type="match status" value="1"/>
</dbReference>
<dbReference type="Gene3D" id="1.20.1050.90">
    <property type="entry name" value="RecF/RecN/SMC, N-terminal domain"/>
    <property type="match status" value="1"/>
</dbReference>
<dbReference type="HAMAP" id="MF_00365">
    <property type="entry name" value="RecF"/>
    <property type="match status" value="1"/>
</dbReference>
<dbReference type="InterPro" id="IPR001238">
    <property type="entry name" value="DNA-binding_RecF"/>
</dbReference>
<dbReference type="InterPro" id="IPR018078">
    <property type="entry name" value="DNA-binding_RecF_CS"/>
</dbReference>
<dbReference type="InterPro" id="IPR027417">
    <property type="entry name" value="P-loop_NTPase"/>
</dbReference>
<dbReference type="InterPro" id="IPR003395">
    <property type="entry name" value="RecF/RecN/SMC_N"/>
</dbReference>
<dbReference type="InterPro" id="IPR042174">
    <property type="entry name" value="RecF_2"/>
</dbReference>
<dbReference type="NCBIfam" id="TIGR00611">
    <property type="entry name" value="recf"/>
    <property type="match status" value="1"/>
</dbReference>
<dbReference type="PANTHER" id="PTHR32182">
    <property type="entry name" value="DNA REPLICATION AND REPAIR PROTEIN RECF"/>
    <property type="match status" value="1"/>
</dbReference>
<dbReference type="PANTHER" id="PTHR32182:SF0">
    <property type="entry name" value="DNA REPLICATION AND REPAIR PROTEIN RECF"/>
    <property type="match status" value="1"/>
</dbReference>
<dbReference type="Pfam" id="PF02463">
    <property type="entry name" value="SMC_N"/>
    <property type="match status" value="1"/>
</dbReference>
<dbReference type="SUPFAM" id="SSF52540">
    <property type="entry name" value="P-loop containing nucleoside triphosphate hydrolases"/>
    <property type="match status" value="1"/>
</dbReference>
<dbReference type="PROSITE" id="PS00617">
    <property type="entry name" value="RECF_1"/>
    <property type="match status" value="1"/>
</dbReference>
<dbReference type="PROSITE" id="PS00618">
    <property type="entry name" value="RECF_2"/>
    <property type="match status" value="1"/>
</dbReference>
<keyword id="KW-0067">ATP-binding</keyword>
<keyword id="KW-0963">Cytoplasm</keyword>
<keyword id="KW-0227">DNA damage</keyword>
<keyword id="KW-0234">DNA repair</keyword>
<keyword id="KW-0235">DNA replication</keyword>
<keyword id="KW-0238">DNA-binding</keyword>
<keyword id="KW-0547">Nucleotide-binding</keyword>
<keyword id="KW-0742">SOS response</keyword>
<evidence type="ECO:0000255" key="1">
    <source>
        <dbReference type="HAMAP-Rule" id="MF_00365"/>
    </source>
</evidence>
<name>RECF_SHEB9</name>
<reference key="1">
    <citation type="submission" date="2007-11" db="EMBL/GenBank/DDBJ databases">
        <title>Complete sequence of chromosome of Shewanella baltica OS195.</title>
        <authorList>
            <consortium name="US DOE Joint Genome Institute"/>
            <person name="Copeland A."/>
            <person name="Lucas S."/>
            <person name="Lapidus A."/>
            <person name="Barry K."/>
            <person name="Glavina del Rio T."/>
            <person name="Dalin E."/>
            <person name="Tice H."/>
            <person name="Pitluck S."/>
            <person name="Chain P."/>
            <person name="Malfatti S."/>
            <person name="Shin M."/>
            <person name="Vergez L."/>
            <person name="Schmutz J."/>
            <person name="Larimer F."/>
            <person name="Land M."/>
            <person name="Hauser L."/>
            <person name="Kyrpides N."/>
            <person name="Kim E."/>
            <person name="Brettar I."/>
            <person name="Rodrigues J."/>
            <person name="Konstantinidis K."/>
            <person name="Klappenbach J."/>
            <person name="Hofle M."/>
            <person name="Tiedje J."/>
            <person name="Richardson P."/>
        </authorList>
    </citation>
    <scope>NUCLEOTIDE SEQUENCE [LARGE SCALE GENOMIC DNA]</scope>
    <source>
        <strain>OS195</strain>
    </source>
</reference>
<accession>A9KU74</accession>
<feature type="chain" id="PRO_1000079604" description="DNA replication and repair protein RecF">
    <location>
        <begin position="1"/>
        <end position="360"/>
    </location>
</feature>
<feature type="binding site" evidence="1">
    <location>
        <begin position="30"/>
        <end position="37"/>
    </location>
    <ligand>
        <name>ATP</name>
        <dbReference type="ChEBI" id="CHEBI:30616"/>
    </ligand>
</feature>
<comment type="function">
    <text evidence="1">The RecF protein is involved in DNA metabolism; it is required for DNA replication and normal SOS inducibility. RecF binds preferentially to single-stranded, linear DNA. It also seems to bind ATP.</text>
</comment>
<comment type="subcellular location">
    <subcellularLocation>
        <location evidence="1">Cytoplasm</location>
    </subcellularLocation>
</comment>
<comment type="similarity">
    <text evidence="1">Belongs to the RecF family.</text>
</comment>
<gene>
    <name evidence="1" type="primary">recF</name>
    <name type="ordered locus">Sbal195_0003</name>
</gene>
<sequence length="360" mass="40625">MSLTRLNIEAFRNIQSAQLIPAPGINLIYGQNGSGKTSILEAIYFLGMGRSFRSHLSQRVINNDDDKLTLFATLNLARGDSKIGLRRFRSGETEVRIDGEKVKRLSTLAETLPIQVITPESFSLLFEGPKSRRQFIDWGAFHADPQFYGAWTNVRRVLKQRNQLLRNGSAYSNIQFWDQEFVRYAEQVTEIRNHYVDSLNELLKGIIGEFLPSVDVKVSFTRGWDSKTDFAELLENQYSRDLATGHTVSGPHKADLRLRVGTLPAQDALSRGQLKLLVCALRIAQGKLLKQQIDKHSIYLVDDLPSELDAQHRQLLLKQLTDTGAQVFVTAIDPAAIVDSLHTPPSRMFHVEQGRVTVIE</sequence>
<protein>
    <recommendedName>
        <fullName evidence="1">DNA replication and repair protein RecF</fullName>
    </recommendedName>
</protein>
<proteinExistence type="inferred from homology"/>